<name>YAS5_SCHPO</name>
<gene>
    <name type="ORF">SPAC3H8.05c</name>
</gene>
<organism>
    <name type="scientific">Schizosaccharomyces pombe (strain 972 / ATCC 24843)</name>
    <name type="common">Fission yeast</name>
    <dbReference type="NCBI Taxonomy" id="284812"/>
    <lineage>
        <taxon>Eukaryota</taxon>
        <taxon>Fungi</taxon>
        <taxon>Dikarya</taxon>
        <taxon>Ascomycota</taxon>
        <taxon>Taphrinomycotina</taxon>
        <taxon>Schizosaccharomycetes</taxon>
        <taxon>Schizosaccharomycetales</taxon>
        <taxon>Schizosaccharomycetaceae</taxon>
        <taxon>Schizosaccharomyces</taxon>
    </lineage>
</organism>
<keyword id="KW-0067">ATP-binding</keyword>
<keyword id="KW-0325">Glycoprotein</keyword>
<keyword id="KW-0547">Nucleotide-binding</keyword>
<keyword id="KW-1185">Reference proteome</keyword>
<keyword id="KW-0732">Signal</keyword>
<proteinExistence type="inferred from homology"/>
<dbReference type="EMBL" id="CU329670">
    <property type="protein sequence ID" value="CAA93162.1"/>
    <property type="molecule type" value="Genomic_DNA"/>
</dbReference>
<dbReference type="PIR" id="T38763">
    <property type="entry name" value="T38763"/>
</dbReference>
<dbReference type="SMR" id="Q10141"/>
<dbReference type="BioGRID" id="280047">
    <property type="interactions" value="73"/>
</dbReference>
<dbReference type="FunCoup" id="Q10141">
    <property type="interactions" value="254"/>
</dbReference>
<dbReference type="STRING" id="284812.Q10141"/>
<dbReference type="PaxDb" id="4896-SPAC3H8.05c.1"/>
<dbReference type="EnsemblFungi" id="SPAC3H8.05c.1">
    <property type="protein sequence ID" value="SPAC3H8.05c.1:pep"/>
    <property type="gene ID" value="SPAC3H8.05c"/>
</dbReference>
<dbReference type="KEGG" id="spo:2543633"/>
<dbReference type="PomBase" id="SPAC3H8.05c"/>
<dbReference type="VEuPathDB" id="FungiDB:SPAC3H8.05c"/>
<dbReference type="eggNOG" id="ENOG502RS08">
    <property type="taxonomic scope" value="Eukaryota"/>
</dbReference>
<dbReference type="HOGENOM" id="CLU_290550_0_0_1"/>
<dbReference type="InParanoid" id="Q10141"/>
<dbReference type="OMA" id="QIECGDL"/>
<dbReference type="PRO" id="PR:Q10141"/>
<dbReference type="Proteomes" id="UP000002485">
    <property type="component" value="Chromosome I"/>
</dbReference>
<dbReference type="GO" id="GO:0035361">
    <property type="term" value="C:Cul8-RING ubiquitin ligase complex"/>
    <property type="evidence" value="ECO:0000266"/>
    <property type="project" value="PomBase"/>
</dbReference>
<dbReference type="GO" id="GO:0005847">
    <property type="term" value="C:mRNA cleavage and polyadenylation specificity factor complex"/>
    <property type="evidence" value="ECO:0000318"/>
    <property type="project" value="GO_Central"/>
</dbReference>
<dbReference type="GO" id="GO:0005730">
    <property type="term" value="C:nucleolus"/>
    <property type="evidence" value="ECO:0007005"/>
    <property type="project" value="PomBase"/>
</dbReference>
<dbReference type="GO" id="GO:0005634">
    <property type="term" value="C:nucleus"/>
    <property type="evidence" value="ECO:0007005"/>
    <property type="project" value="PomBase"/>
</dbReference>
<dbReference type="GO" id="GO:0005524">
    <property type="term" value="F:ATP binding"/>
    <property type="evidence" value="ECO:0007669"/>
    <property type="project" value="UniProtKB-KW"/>
</dbReference>
<dbReference type="GO" id="GO:0003676">
    <property type="term" value="F:nucleic acid binding"/>
    <property type="evidence" value="ECO:0007669"/>
    <property type="project" value="InterPro"/>
</dbReference>
<dbReference type="GO" id="GO:0070651">
    <property type="term" value="P:nonfunctional rRNA decay"/>
    <property type="evidence" value="ECO:0000266"/>
    <property type="project" value="PomBase"/>
</dbReference>
<dbReference type="GO" id="GO:0000725">
    <property type="term" value="P:recombinational repair"/>
    <property type="evidence" value="ECO:0000266"/>
    <property type="project" value="PomBase"/>
</dbReference>
<dbReference type="GO" id="GO:0031297">
    <property type="term" value="P:replication fork processing"/>
    <property type="evidence" value="ECO:0000266"/>
    <property type="project" value="PomBase"/>
</dbReference>
<dbReference type="Gene3D" id="2.130.10.10">
    <property type="entry name" value="YVTN repeat-like/Quinoprotein amine dehydrogenase"/>
    <property type="match status" value="1"/>
</dbReference>
<dbReference type="InterPro" id="IPR004871">
    <property type="entry name" value="Cleavage/polyA-sp_fac_asu_C"/>
</dbReference>
<dbReference type="InterPro" id="IPR050358">
    <property type="entry name" value="RSE1/DDB1/CFT1/CPSF1"/>
</dbReference>
<dbReference type="InterPro" id="IPR015943">
    <property type="entry name" value="WD40/YVTN_repeat-like_dom_sf"/>
</dbReference>
<dbReference type="PANTHER" id="PTHR10644">
    <property type="entry name" value="DNA REPAIR/RNA PROCESSING CPSF FAMILY"/>
    <property type="match status" value="1"/>
</dbReference>
<dbReference type="Pfam" id="PF03178">
    <property type="entry name" value="CPSF_A"/>
    <property type="match status" value="1"/>
</dbReference>
<dbReference type="SUPFAM" id="SSF101908">
    <property type="entry name" value="Putative isomerase YbhE"/>
    <property type="match status" value="1"/>
</dbReference>
<evidence type="ECO:0000255" key="1"/>
<protein>
    <recommendedName>
        <fullName>Uncharacterized protein C3H8.05c</fullName>
    </recommendedName>
</protein>
<sequence>MAEIIHHSNVFTWAFHVSEYDGAPLLLLGSFSSVASVSLKRSGDLLLFERFTLPARTRSVALLSSHFLQSESGRHSIANILIATENGKCYLLQLVKTPEKAFPTIRIRDEFVLDTRMYNHEQLGKSIDLCPNASLWATNSFAGDIVFFFSHHPSLSKQVFAQLSIDGIILHTIFVPPKRSSSSCVTYVCLFLDSNSNPRINVYRWSKTETFSDASSYITFSIPVPSEFSLASHIIPCSNIPDHFLVLLETKICLLSVPQIECGDLKFLQTDLPCSGSHNYPLSIANDNETPNCCYLTYENGDLYRIRYSILSIDINLIGKTGSSLGNLILPCYPYIVFCGDCSDTLVYDVSVSPMSFFGSLIACAPMWDFVYSSSRHNTLLDEDINCNTVYATAGIGKSGCLVTMRYGCSSTTLLEAILTEGAVLSGIINSNHNSEFYAWLTYPWQTQILRLHLDGVVEDVTESLFLDDIKALYVINYQNTFIIITGKSIYAVTPSCTKYNLLEVSGDEEFVLAAYNELIFIVKKDLMNFKSQLLTLKLNTLSNGTLELQSLPDSFDLHDVPTCITSFSLERKLLVILVHPSPYFECVFYDETSHSSVYKVPLTGFQFGYLPHSISYLRKSNRAVYVLISSNSTLLTVYVTLTLEGVPDFKVYSNPISTDLPLTLQSPSDEFSTIYAWSDYLYIVGIDMETEQPTLNQILEVNDSFTCVSGIYDIPNKFQNSESRIIVYYSNNTLYLSELWLPQRTFSSKLNLAATPKRLLVDKYTNTLIIGCCHVLVNEITTSGLAFYDLTNSRLFPVNWPSMDIKGKPIFKPEELLYSMSFWIVADDQKRKYRYLCIGTGVRKNGLTTGRLLILTMNKDHDSNAIELRNVITINMKDPIYSVCSIGKHGLCYATGRKIGVKMLDLDSKKFCNSDCELPVRSPIVSMSTYKDYVYTSSLRDSVAVFQYDSENNSLNLVCSDTSSRLGIDCFYISQKKLLFSCDKDRLLTCFKVEGEVCTSTREQMLQPILTTVSQTKTNALTNHLKYSVIRVDKDNHNIVWGLMGCTLDGNIFKILMPNDPTSSDTIIYSDT</sequence>
<accession>Q10141</accession>
<reference key="1">
    <citation type="journal article" date="2002" name="Nature">
        <title>The genome sequence of Schizosaccharomyces pombe.</title>
        <authorList>
            <person name="Wood V."/>
            <person name="Gwilliam R."/>
            <person name="Rajandream M.A."/>
            <person name="Lyne M.H."/>
            <person name="Lyne R."/>
            <person name="Stewart A."/>
            <person name="Sgouros J.G."/>
            <person name="Peat N."/>
            <person name="Hayles J."/>
            <person name="Baker S.G."/>
            <person name="Basham D."/>
            <person name="Bowman S."/>
            <person name="Brooks K."/>
            <person name="Brown D."/>
            <person name="Brown S."/>
            <person name="Chillingworth T."/>
            <person name="Churcher C.M."/>
            <person name="Collins M."/>
            <person name="Connor R."/>
            <person name="Cronin A."/>
            <person name="Davis P."/>
            <person name="Feltwell T."/>
            <person name="Fraser A."/>
            <person name="Gentles S."/>
            <person name="Goble A."/>
            <person name="Hamlin N."/>
            <person name="Harris D.E."/>
            <person name="Hidalgo J."/>
            <person name="Hodgson G."/>
            <person name="Holroyd S."/>
            <person name="Hornsby T."/>
            <person name="Howarth S."/>
            <person name="Huckle E.J."/>
            <person name="Hunt S."/>
            <person name="Jagels K."/>
            <person name="James K.D."/>
            <person name="Jones L."/>
            <person name="Jones M."/>
            <person name="Leather S."/>
            <person name="McDonald S."/>
            <person name="McLean J."/>
            <person name="Mooney P."/>
            <person name="Moule S."/>
            <person name="Mungall K.L."/>
            <person name="Murphy L.D."/>
            <person name="Niblett D."/>
            <person name="Odell C."/>
            <person name="Oliver K."/>
            <person name="O'Neil S."/>
            <person name="Pearson D."/>
            <person name="Quail M.A."/>
            <person name="Rabbinowitsch E."/>
            <person name="Rutherford K.M."/>
            <person name="Rutter S."/>
            <person name="Saunders D."/>
            <person name="Seeger K."/>
            <person name="Sharp S."/>
            <person name="Skelton J."/>
            <person name="Simmonds M.N."/>
            <person name="Squares R."/>
            <person name="Squares S."/>
            <person name="Stevens K."/>
            <person name="Taylor K."/>
            <person name="Taylor R.G."/>
            <person name="Tivey A."/>
            <person name="Walsh S.V."/>
            <person name="Warren T."/>
            <person name="Whitehead S."/>
            <person name="Woodward J.R."/>
            <person name="Volckaert G."/>
            <person name="Aert R."/>
            <person name="Robben J."/>
            <person name="Grymonprez B."/>
            <person name="Weltjens I."/>
            <person name="Vanstreels E."/>
            <person name="Rieger M."/>
            <person name="Schaefer M."/>
            <person name="Mueller-Auer S."/>
            <person name="Gabel C."/>
            <person name="Fuchs M."/>
            <person name="Duesterhoeft A."/>
            <person name="Fritzc C."/>
            <person name="Holzer E."/>
            <person name="Moestl D."/>
            <person name="Hilbert H."/>
            <person name="Borzym K."/>
            <person name="Langer I."/>
            <person name="Beck A."/>
            <person name="Lehrach H."/>
            <person name="Reinhardt R."/>
            <person name="Pohl T.M."/>
            <person name="Eger P."/>
            <person name="Zimmermann W."/>
            <person name="Wedler H."/>
            <person name="Wambutt R."/>
            <person name="Purnelle B."/>
            <person name="Goffeau A."/>
            <person name="Cadieu E."/>
            <person name="Dreano S."/>
            <person name="Gloux S."/>
            <person name="Lelaure V."/>
            <person name="Mottier S."/>
            <person name="Galibert F."/>
            <person name="Aves S.J."/>
            <person name="Xiang Z."/>
            <person name="Hunt C."/>
            <person name="Moore K."/>
            <person name="Hurst S.M."/>
            <person name="Lucas M."/>
            <person name="Rochet M."/>
            <person name="Gaillardin C."/>
            <person name="Tallada V.A."/>
            <person name="Garzon A."/>
            <person name="Thode G."/>
            <person name="Daga R.R."/>
            <person name="Cruzado L."/>
            <person name="Jimenez J."/>
            <person name="Sanchez M."/>
            <person name="del Rey F."/>
            <person name="Benito J."/>
            <person name="Dominguez A."/>
            <person name="Revuelta J.L."/>
            <person name="Moreno S."/>
            <person name="Armstrong J."/>
            <person name="Forsburg S.L."/>
            <person name="Cerutti L."/>
            <person name="Lowe T."/>
            <person name="McCombie W.R."/>
            <person name="Paulsen I."/>
            <person name="Potashkin J."/>
            <person name="Shpakovski G.V."/>
            <person name="Ussery D."/>
            <person name="Barrell B.G."/>
            <person name="Nurse P."/>
        </authorList>
    </citation>
    <scope>NUCLEOTIDE SEQUENCE [LARGE SCALE GENOMIC DNA]</scope>
    <source>
        <strain>972 / ATCC 24843</strain>
    </source>
</reference>
<feature type="signal peptide" evidence="1">
    <location>
        <begin position="1"/>
        <end position="36"/>
    </location>
</feature>
<feature type="chain" id="PRO_0000014191" description="Uncharacterized protein C3H8.05c">
    <location>
        <begin position="37"/>
        <end position="1073"/>
    </location>
</feature>
<feature type="binding site" evidence="1">
    <location>
        <begin position="392"/>
        <end position="399"/>
    </location>
    <ligand>
        <name>ATP</name>
        <dbReference type="ChEBI" id="CHEBI:30616"/>
    </ligand>
</feature>
<feature type="glycosylation site" description="N-linked (GlcNAc...) asparagine" evidence="1">
    <location>
        <position position="132"/>
    </location>
</feature>
<feature type="glycosylation site" description="N-linked (GlcNAc...) asparagine" evidence="1">
    <location>
        <position position="544"/>
    </location>
</feature>
<feature type="glycosylation site" description="N-linked (GlcNAc...) asparagine" evidence="1">
    <location>
        <position position="632"/>
    </location>
</feature>
<feature type="glycosylation site" description="N-linked (GlcNAc...) asparagine" evidence="1">
    <location>
        <position position="703"/>
    </location>
</feature>
<feature type="glycosylation site" description="N-linked (GlcNAc...) asparagine" evidence="1">
    <location>
        <position position="732"/>
    </location>
</feature>
<feature type="glycosylation site" description="N-linked (GlcNAc...) asparagine" evidence="1">
    <location>
        <position position="953"/>
    </location>
</feature>